<name>RLMN_BLOPB</name>
<gene>
    <name evidence="1" type="primary">rlmN</name>
    <name type="ordered locus">BPEN_552</name>
</gene>
<evidence type="ECO:0000255" key="1">
    <source>
        <dbReference type="HAMAP-Rule" id="MF_01849"/>
    </source>
</evidence>
<evidence type="ECO:0000255" key="2">
    <source>
        <dbReference type="PROSITE-ProRule" id="PRU01266"/>
    </source>
</evidence>
<dbReference type="EC" id="2.1.1.192" evidence="1"/>
<dbReference type="EMBL" id="CP000016">
    <property type="protein sequence ID" value="AAZ41162.1"/>
    <property type="molecule type" value="Genomic_DNA"/>
</dbReference>
<dbReference type="RefSeq" id="WP_011283073.1">
    <property type="nucleotide sequence ID" value="NC_007292.1"/>
</dbReference>
<dbReference type="SMR" id="Q492D9"/>
<dbReference type="STRING" id="291272.BPEN_552"/>
<dbReference type="KEGG" id="bpn:BPEN_552"/>
<dbReference type="eggNOG" id="COG0820">
    <property type="taxonomic scope" value="Bacteria"/>
</dbReference>
<dbReference type="HOGENOM" id="CLU_029101_0_0_6"/>
<dbReference type="OrthoDB" id="9793973at2"/>
<dbReference type="Proteomes" id="UP000007794">
    <property type="component" value="Chromosome"/>
</dbReference>
<dbReference type="GO" id="GO:0005737">
    <property type="term" value="C:cytoplasm"/>
    <property type="evidence" value="ECO:0007669"/>
    <property type="project" value="UniProtKB-SubCell"/>
</dbReference>
<dbReference type="GO" id="GO:0051539">
    <property type="term" value="F:4 iron, 4 sulfur cluster binding"/>
    <property type="evidence" value="ECO:0007669"/>
    <property type="project" value="UniProtKB-UniRule"/>
</dbReference>
<dbReference type="GO" id="GO:0046872">
    <property type="term" value="F:metal ion binding"/>
    <property type="evidence" value="ECO:0007669"/>
    <property type="project" value="UniProtKB-KW"/>
</dbReference>
<dbReference type="GO" id="GO:0070040">
    <property type="term" value="F:rRNA (adenine(2503)-C2-)-methyltransferase activity"/>
    <property type="evidence" value="ECO:0007669"/>
    <property type="project" value="UniProtKB-UniRule"/>
</dbReference>
<dbReference type="GO" id="GO:0019843">
    <property type="term" value="F:rRNA binding"/>
    <property type="evidence" value="ECO:0007669"/>
    <property type="project" value="UniProtKB-UniRule"/>
</dbReference>
<dbReference type="GO" id="GO:0002935">
    <property type="term" value="F:tRNA (adenine(37)-C2)-methyltransferase activity"/>
    <property type="evidence" value="ECO:0007669"/>
    <property type="project" value="UniProtKB-UniRule"/>
</dbReference>
<dbReference type="GO" id="GO:0000049">
    <property type="term" value="F:tRNA binding"/>
    <property type="evidence" value="ECO:0007669"/>
    <property type="project" value="UniProtKB-UniRule"/>
</dbReference>
<dbReference type="GO" id="GO:0070475">
    <property type="term" value="P:rRNA base methylation"/>
    <property type="evidence" value="ECO:0007669"/>
    <property type="project" value="UniProtKB-UniRule"/>
</dbReference>
<dbReference type="GO" id="GO:0030488">
    <property type="term" value="P:tRNA methylation"/>
    <property type="evidence" value="ECO:0007669"/>
    <property type="project" value="UniProtKB-UniRule"/>
</dbReference>
<dbReference type="CDD" id="cd01335">
    <property type="entry name" value="Radical_SAM"/>
    <property type="match status" value="1"/>
</dbReference>
<dbReference type="FunFam" id="1.10.150.530:FF:000003">
    <property type="entry name" value="Dual-specificity RNA methyltransferase RlmN"/>
    <property type="match status" value="1"/>
</dbReference>
<dbReference type="FunFam" id="3.20.20.70:FF:000008">
    <property type="entry name" value="Dual-specificity RNA methyltransferase RlmN"/>
    <property type="match status" value="1"/>
</dbReference>
<dbReference type="Gene3D" id="1.10.150.530">
    <property type="match status" value="1"/>
</dbReference>
<dbReference type="Gene3D" id="3.20.20.70">
    <property type="entry name" value="Aldolase class I"/>
    <property type="match status" value="1"/>
</dbReference>
<dbReference type="HAMAP" id="MF_01849">
    <property type="entry name" value="RNA_methyltr_RlmN"/>
    <property type="match status" value="1"/>
</dbReference>
<dbReference type="InterPro" id="IPR013785">
    <property type="entry name" value="Aldolase_TIM"/>
</dbReference>
<dbReference type="InterPro" id="IPR040072">
    <property type="entry name" value="Methyltransferase_A"/>
</dbReference>
<dbReference type="InterPro" id="IPR048641">
    <property type="entry name" value="RlmN_N"/>
</dbReference>
<dbReference type="InterPro" id="IPR027492">
    <property type="entry name" value="RNA_MTrfase_RlmN"/>
</dbReference>
<dbReference type="InterPro" id="IPR004383">
    <property type="entry name" value="rRNA_lsu_MTrfase_RlmN/Cfr"/>
</dbReference>
<dbReference type="InterPro" id="IPR007197">
    <property type="entry name" value="rSAM"/>
</dbReference>
<dbReference type="NCBIfam" id="TIGR00048">
    <property type="entry name" value="rRNA_mod_RlmN"/>
    <property type="match status" value="1"/>
</dbReference>
<dbReference type="PANTHER" id="PTHR30544">
    <property type="entry name" value="23S RRNA METHYLTRANSFERASE"/>
    <property type="match status" value="1"/>
</dbReference>
<dbReference type="PANTHER" id="PTHR30544:SF5">
    <property type="entry name" value="RADICAL SAM CORE DOMAIN-CONTAINING PROTEIN"/>
    <property type="match status" value="1"/>
</dbReference>
<dbReference type="Pfam" id="PF04055">
    <property type="entry name" value="Radical_SAM"/>
    <property type="match status" value="1"/>
</dbReference>
<dbReference type="Pfam" id="PF21016">
    <property type="entry name" value="RlmN_N"/>
    <property type="match status" value="1"/>
</dbReference>
<dbReference type="PIRSF" id="PIRSF006004">
    <property type="entry name" value="CHP00048"/>
    <property type="match status" value="1"/>
</dbReference>
<dbReference type="SFLD" id="SFLDF00275">
    <property type="entry name" value="adenosine_C2_methyltransferase"/>
    <property type="match status" value="1"/>
</dbReference>
<dbReference type="SFLD" id="SFLDG01062">
    <property type="entry name" value="methyltransferase_(Class_A)"/>
    <property type="match status" value="1"/>
</dbReference>
<dbReference type="SUPFAM" id="SSF102114">
    <property type="entry name" value="Radical SAM enzymes"/>
    <property type="match status" value="1"/>
</dbReference>
<dbReference type="PROSITE" id="PS51918">
    <property type="entry name" value="RADICAL_SAM"/>
    <property type="match status" value="1"/>
</dbReference>
<sequence>MDLEKYIFMYAKKVNLLNMNKEELLIFFDKLGEKPFRSHQIMRWIYHYYCDDFNYMTNISKSLKERLKQIAEIRAPIIIKEQLSSDGTIKWAMKIDEQQIETVYIPENKRTTLCVSSQIGCPLGCSFCGTAQQGFNRNLNVSEIIGQVWRAAQLINLNKKIKIKNNRFPITNIVFMGMGEPLLNIVNVVSAIRIILDDFGFKLSKRHITLSTAGIVPGIEKLKNMIDIPLAISLHAPNDIIRNKIMPINKKYNINSVLEAARRYSMDTKSNHGRITIEYVLLKNINDDVLHAHQLAKQLQGIPCKINLIPWNPIPNIRYACSSQIRMRAFLKVLLKYNIVTIIRKIRGADINAACGQLTGEVINRINLQYNSL</sequence>
<proteinExistence type="inferred from homology"/>
<accession>Q492D9</accession>
<feature type="chain" id="PRO_0000350052" description="Dual-specificity RNA methyltransferase RlmN">
    <location>
        <begin position="1"/>
        <end position="373"/>
    </location>
</feature>
<feature type="domain" description="Radical SAM core" evidence="2">
    <location>
        <begin position="107"/>
        <end position="350"/>
    </location>
</feature>
<feature type="active site" description="Proton acceptor" evidence="1">
    <location>
        <position position="101"/>
    </location>
</feature>
<feature type="active site" description="S-methylcysteine intermediate" evidence="1">
    <location>
        <position position="355"/>
    </location>
</feature>
<feature type="binding site" evidence="1">
    <location>
        <position position="121"/>
    </location>
    <ligand>
        <name>[4Fe-4S] cluster</name>
        <dbReference type="ChEBI" id="CHEBI:49883"/>
        <note>4Fe-4S-S-AdoMet</note>
    </ligand>
</feature>
<feature type="binding site" evidence="1">
    <location>
        <position position="125"/>
    </location>
    <ligand>
        <name>[4Fe-4S] cluster</name>
        <dbReference type="ChEBI" id="CHEBI:49883"/>
        <note>4Fe-4S-S-AdoMet</note>
    </ligand>
</feature>
<feature type="binding site" evidence="1">
    <location>
        <position position="128"/>
    </location>
    <ligand>
        <name>[4Fe-4S] cluster</name>
        <dbReference type="ChEBI" id="CHEBI:49883"/>
        <note>4Fe-4S-S-AdoMet</note>
    </ligand>
</feature>
<feature type="binding site" evidence="1">
    <location>
        <begin position="179"/>
        <end position="180"/>
    </location>
    <ligand>
        <name>S-adenosyl-L-methionine</name>
        <dbReference type="ChEBI" id="CHEBI:59789"/>
    </ligand>
</feature>
<feature type="binding site" evidence="1">
    <location>
        <position position="211"/>
    </location>
    <ligand>
        <name>S-adenosyl-L-methionine</name>
        <dbReference type="ChEBI" id="CHEBI:59789"/>
    </ligand>
</feature>
<feature type="binding site" evidence="1">
    <location>
        <begin position="233"/>
        <end position="235"/>
    </location>
    <ligand>
        <name>S-adenosyl-L-methionine</name>
        <dbReference type="ChEBI" id="CHEBI:59789"/>
    </ligand>
</feature>
<feature type="binding site" evidence="1">
    <location>
        <position position="312"/>
    </location>
    <ligand>
        <name>S-adenosyl-L-methionine</name>
        <dbReference type="ChEBI" id="CHEBI:59789"/>
    </ligand>
</feature>
<feature type="disulfide bond" description="(transient)" evidence="1">
    <location>
        <begin position="114"/>
        <end position="355"/>
    </location>
</feature>
<protein>
    <recommendedName>
        <fullName evidence="1">Dual-specificity RNA methyltransferase RlmN</fullName>
        <ecNumber evidence="1">2.1.1.192</ecNumber>
    </recommendedName>
    <alternativeName>
        <fullName evidence="1">23S rRNA (adenine(2503)-C(2))-methyltransferase</fullName>
    </alternativeName>
    <alternativeName>
        <fullName evidence="1">23S rRNA m2A2503 methyltransferase</fullName>
    </alternativeName>
    <alternativeName>
        <fullName evidence="1">Ribosomal RNA large subunit methyltransferase N</fullName>
    </alternativeName>
    <alternativeName>
        <fullName evidence="1">tRNA (adenine(37)-C(2))-methyltransferase</fullName>
    </alternativeName>
    <alternativeName>
        <fullName evidence="1">tRNA m2A37 methyltransferase</fullName>
    </alternativeName>
</protein>
<organism>
    <name type="scientific">Blochmanniella pennsylvanica (strain BPEN)</name>
    <dbReference type="NCBI Taxonomy" id="291272"/>
    <lineage>
        <taxon>Bacteria</taxon>
        <taxon>Pseudomonadati</taxon>
        <taxon>Pseudomonadota</taxon>
        <taxon>Gammaproteobacteria</taxon>
        <taxon>Enterobacterales</taxon>
        <taxon>Enterobacteriaceae</taxon>
        <taxon>ant endosymbionts</taxon>
        <taxon>Candidatus Blochmanniella</taxon>
    </lineage>
</organism>
<comment type="function">
    <text evidence="1">Specifically methylates position 2 of adenine 2503 in 23S rRNA and position 2 of adenine 37 in tRNAs. m2A2503 modification seems to play a crucial role in the proofreading step occurring at the peptidyl transferase center and thus would serve to optimize ribosomal fidelity.</text>
</comment>
<comment type="catalytic activity">
    <reaction evidence="1">
        <text>adenosine(2503) in 23S rRNA + 2 reduced [2Fe-2S]-[ferredoxin] + 2 S-adenosyl-L-methionine = 2-methyladenosine(2503) in 23S rRNA + 5'-deoxyadenosine + L-methionine + 2 oxidized [2Fe-2S]-[ferredoxin] + S-adenosyl-L-homocysteine</text>
        <dbReference type="Rhea" id="RHEA:42916"/>
        <dbReference type="Rhea" id="RHEA-COMP:10000"/>
        <dbReference type="Rhea" id="RHEA-COMP:10001"/>
        <dbReference type="Rhea" id="RHEA-COMP:10152"/>
        <dbReference type="Rhea" id="RHEA-COMP:10282"/>
        <dbReference type="ChEBI" id="CHEBI:17319"/>
        <dbReference type="ChEBI" id="CHEBI:33737"/>
        <dbReference type="ChEBI" id="CHEBI:33738"/>
        <dbReference type="ChEBI" id="CHEBI:57844"/>
        <dbReference type="ChEBI" id="CHEBI:57856"/>
        <dbReference type="ChEBI" id="CHEBI:59789"/>
        <dbReference type="ChEBI" id="CHEBI:74411"/>
        <dbReference type="ChEBI" id="CHEBI:74497"/>
        <dbReference type="EC" id="2.1.1.192"/>
    </reaction>
</comment>
<comment type="catalytic activity">
    <reaction evidence="1">
        <text>adenosine(37) in tRNA + 2 reduced [2Fe-2S]-[ferredoxin] + 2 S-adenosyl-L-methionine = 2-methyladenosine(37) in tRNA + 5'-deoxyadenosine + L-methionine + 2 oxidized [2Fe-2S]-[ferredoxin] + S-adenosyl-L-homocysteine</text>
        <dbReference type="Rhea" id="RHEA:43332"/>
        <dbReference type="Rhea" id="RHEA-COMP:10000"/>
        <dbReference type="Rhea" id="RHEA-COMP:10001"/>
        <dbReference type="Rhea" id="RHEA-COMP:10162"/>
        <dbReference type="Rhea" id="RHEA-COMP:10485"/>
        <dbReference type="ChEBI" id="CHEBI:17319"/>
        <dbReference type="ChEBI" id="CHEBI:33737"/>
        <dbReference type="ChEBI" id="CHEBI:33738"/>
        <dbReference type="ChEBI" id="CHEBI:57844"/>
        <dbReference type="ChEBI" id="CHEBI:57856"/>
        <dbReference type="ChEBI" id="CHEBI:59789"/>
        <dbReference type="ChEBI" id="CHEBI:74411"/>
        <dbReference type="ChEBI" id="CHEBI:74497"/>
        <dbReference type="EC" id="2.1.1.192"/>
    </reaction>
</comment>
<comment type="cofactor">
    <cofactor evidence="1">
        <name>[4Fe-4S] cluster</name>
        <dbReference type="ChEBI" id="CHEBI:49883"/>
    </cofactor>
    <text evidence="1">Binds 1 [4Fe-4S] cluster. The cluster is coordinated with 3 cysteines and an exchangeable S-adenosyl-L-methionine.</text>
</comment>
<comment type="subcellular location">
    <subcellularLocation>
        <location evidence="1">Cytoplasm</location>
    </subcellularLocation>
</comment>
<comment type="miscellaneous">
    <text evidence="1">Reaction proceeds by a ping-pong mechanism involving intermediate methylation of a conserved cysteine residue.</text>
</comment>
<comment type="similarity">
    <text evidence="1">Belongs to the radical SAM superfamily. RlmN family.</text>
</comment>
<reference key="1">
    <citation type="journal article" date="2005" name="Genome Res.">
        <title>Genome sequence of Blochmannia pennsylvanicus indicates parallel evolutionary trends among bacterial mutualists of insects.</title>
        <authorList>
            <person name="Degnan P.H."/>
            <person name="Lazarus A.B."/>
            <person name="Wernegreen J.J."/>
        </authorList>
    </citation>
    <scope>NUCLEOTIDE SEQUENCE [LARGE SCALE GENOMIC DNA]</scope>
    <source>
        <strain>BPEN</strain>
    </source>
</reference>
<keyword id="KW-0004">4Fe-4S</keyword>
<keyword id="KW-0963">Cytoplasm</keyword>
<keyword id="KW-1015">Disulfide bond</keyword>
<keyword id="KW-0408">Iron</keyword>
<keyword id="KW-0411">Iron-sulfur</keyword>
<keyword id="KW-0479">Metal-binding</keyword>
<keyword id="KW-0489">Methyltransferase</keyword>
<keyword id="KW-1185">Reference proteome</keyword>
<keyword id="KW-0698">rRNA processing</keyword>
<keyword id="KW-0949">S-adenosyl-L-methionine</keyword>
<keyword id="KW-0808">Transferase</keyword>
<keyword id="KW-0819">tRNA processing</keyword>